<keyword id="KW-0963">Cytoplasm</keyword>
<keyword id="KW-0520">NAD</keyword>
<keyword id="KW-0560">Oxidoreductase</keyword>
<keyword id="KW-0664">Pyridoxine biosynthesis</keyword>
<keyword id="KW-1185">Reference proteome</keyword>
<feature type="chain" id="PRO_1000216073" description="Erythronate-4-phosphate dehydrogenase">
    <location>
        <begin position="1"/>
        <end position="370"/>
    </location>
</feature>
<feature type="active site" evidence="1">
    <location>
        <position position="202"/>
    </location>
</feature>
<feature type="active site" evidence="1">
    <location>
        <position position="233"/>
    </location>
</feature>
<feature type="active site" description="Proton donor" evidence="1">
    <location>
        <position position="250"/>
    </location>
</feature>
<feature type="binding site" evidence="1">
    <location>
        <position position="45"/>
    </location>
    <ligand>
        <name>substrate</name>
    </ligand>
</feature>
<feature type="binding site" evidence="1">
    <location>
        <position position="66"/>
    </location>
    <ligand>
        <name>substrate</name>
    </ligand>
</feature>
<feature type="binding site" evidence="1">
    <location>
        <position position="142"/>
    </location>
    <ligand>
        <name>NAD(+)</name>
        <dbReference type="ChEBI" id="CHEBI:57540"/>
    </ligand>
</feature>
<feature type="binding site" evidence="1">
    <location>
        <position position="169"/>
    </location>
    <ligand>
        <name>NAD(+)</name>
        <dbReference type="ChEBI" id="CHEBI:57540"/>
    </ligand>
</feature>
<feature type="binding site" evidence="1">
    <location>
        <position position="228"/>
    </location>
    <ligand>
        <name>NAD(+)</name>
        <dbReference type="ChEBI" id="CHEBI:57540"/>
    </ligand>
</feature>
<feature type="binding site" evidence="1">
    <location>
        <position position="253"/>
    </location>
    <ligand>
        <name>NAD(+)</name>
        <dbReference type="ChEBI" id="CHEBI:57540"/>
    </ligand>
</feature>
<feature type="binding site" evidence="1">
    <location>
        <position position="254"/>
    </location>
    <ligand>
        <name>substrate</name>
    </ligand>
</feature>
<evidence type="ECO:0000255" key="1">
    <source>
        <dbReference type="HAMAP-Rule" id="MF_01825"/>
    </source>
</evidence>
<sequence length="370" mass="39575">MKIVVDENIPLADALFGDLGEIIRKPGREISSADVAEADALLVRSVTRVNADLLTGSKVKFVGTCTIGTDHLDKEFLAEAGIRFASAPGCNAQGVVQYDLAALAHLGYLARDIRVGIIGCGNVGGSLHRALTGMGVTCVCYDPFLTQDQNADLADWDALFTCDVICVHTPLTRSGPYPTHHMLSTPFFRAMRDGALLLNAGRGEVIDNRALKAYLQGDNSNHLSVVLDVWEGEPAIDAELAPLVKIATPHIAGYSFEGKTNGSLMIYEALAEFLGVNATERSARVAAVKAQAYGAAEPLDADDLVTAILATHPITRDDKALRDQLDQLPAGFDALRKGYPVRREFSHYQLTSAQIPANVTALGFSLDSAK</sequence>
<reference key="1">
    <citation type="journal article" date="2009" name="PLoS ONE">
        <title>The complete genome of Teredinibacter turnerae T7901: an intracellular endosymbiont of marine wood-boring bivalves (shipworms).</title>
        <authorList>
            <person name="Yang J.C."/>
            <person name="Madupu R."/>
            <person name="Durkin A.S."/>
            <person name="Ekborg N.A."/>
            <person name="Pedamallu C.S."/>
            <person name="Hostetler J.B."/>
            <person name="Radune D."/>
            <person name="Toms B.S."/>
            <person name="Henrissat B."/>
            <person name="Coutinho P.M."/>
            <person name="Schwarz S."/>
            <person name="Field L."/>
            <person name="Trindade-Silva A.E."/>
            <person name="Soares C.A.G."/>
            <person name="Elshahawi S."/>
            <person name="Hanora A."/>
            <person name="Schmidt E.W."/>
            <person name="Haygood M.G."/>
            <person name="Posfai J."/>
            <person name="Benner J."/>
            <person name="Madinger C."/>
            <person name="Nove J."/>
            <person name="Anton B."/>
            <person name="Chaudhary K."/>
            <person name="Foster J."/>
            <person name="Holman A."/>
            <person name="Kumar S."/>
            <person name="Lessard P.A."/>
            <person name="Luyten Y.A."/>
            <person name="Slatko B."/>
            <person name="Wood N."/>
            <person name="Wu B."/>
            <person name="Teplitski M."/>
            <person name="Mougous J.D."/>
            <person name="Ward N."/>
            <person name="Eisen J.A."/>
            <person name="Badger J.H."/>
            <person name="Distel D.L."/>
        </authorList>
    </citation>
    <scope>NUCLEOTIDE SEQUENCE [LARGE SCALE GENOMIC DNA]</scope>
    <source>
        <strain>ATCC 39867 / T7901</strain>
    </source>
</reference>
<proteinExistence type="inferred from homology"/>
<gene>
    <name evidence="1" type="primary">pdxB</name>
    <name type="ordered locus">TERTU_1127</name>
</gene>
<name>PDXB_TERTT</name>
<protein>
    <recommendedName>
        <fullName evidence="1">Erythronate-4-phosphate dehydrogenase</fullName>
        <ecNumber evidence="1">1.1.1.290</ecNumber>
    </recommendedName>
</protein>
<comment type="function">
    <text evidence="1">Catalyzes the oxidation of erythronate-4-phosphate to 3-hydroxy-2-oxo-4-phosphonooxybutanoate.</text>
</comment>
<comment type="catalytic activity">
    <reaction evidence="1">
        <text>4-phospho-D-erythronate + NAD(+) = (R)-3-hydroxy-2-oxo-4-phosphooxybutanoate + NADH + H(+)</text>
        <dbReference type="Rhea" id="RHEA:18829"/>
        <dbReference type="ChEBI" id="CHEBI:15378"/>
        <dbReference type="ChEBI" id="CHEBI:57540"/>
        <dbReference type="ChEBI" id="CHEBI:57945"/>
        <dbReference type="ChEBI" id="CHEBI:58538"/>
        <dbReference type="ChEBI" id="CHEBI:58766"/>
        <dbReference type="EC" id="1.1.1.290"/>
    </reaction>
</comment>
<comment type="pathway">
    <text evidence="1">Cofactor biosynthesis; pyridoxine 5'-phosphate biosynthesis; pyridoxine 5'-phosphate from D-erythrose 4-phosphate: step 2/5.</text>
</comment>
<comment type="subunit">
    <text evidence="1">Homodimer.</text>
</comment>
<comment type="subcellular location">
    <subcellularLocation>
        <location evidence="1">Cytoplasm</location>
    </subcellularLocation>
</comment>
<comment type="similarity">
    <text evidence="1">Belongs to the D-isomer specific 2-hydroxyacid dehydrogenase family. PdxB subfamily.</text>
</comment>
<dbReference type="EC" id="1.1.1.290" evidence="1"/>
<dbReference type="EMBL" id="CP001614">
    <property type="protein sequence ID" value="ACR11693.1"/>
    <property type="molecule type" value="Genomic_DNA"/>
</dbReference>
<dbReference type="RefSeq" id="WP_015817805.1">
    <property type="nucleotide sequence ID" value="NC_012997.1"/>
</dbReference>
<dbReference type="SMR" id="C5BR49"/>
<dbReference type="STRING" id="377629.TERTU_1127"/>
<dbReference type="KEGG" id="ttu:TERTU_1127"/>
<dbReference type="eggNOG" id="COG0111">
    <property type="taxonomic scope" value="Bacteria"/>
</dbReference>
<dbReference type="HOGENOM" id="CLU_019796_4_0_6"/>
<dbReference type="OrthoDB" id="9770208at2"/>
<dbReference type="UniPathway" id="UPA00244">
    <property type="reaction ID" value="UER00310"/>
</dbReference>
<dbReference type="Proteomes" id="UP000009080">
    <property type="component" value="Chromosome"/>
</dbReference>
<dbReference type="GO" id="GO:0005829">
    <property type="term" value="C:cytosol"/>
    <property type="evidence" value="ECO:0007669"/>
    <property type="project" value="TreeGrafter"/>
</dbReference>
<dbReference type="GO" id="GO:0033711">
    <property type="term" value="F:4-phosphoerythronate dehydrogenase activity"/>
    <property type="evidence" value="ECO:0007669"/>
    <property type="project" value="UniProtKB-EC"/>
</dbReference>
<dbReference type="GO" id="GO:0051287">
    <property type="term" value="F:NAD binding"/>
    <property type="evidence" value="ECO:0007669"/>
    <property type="project" value="InterPro"/>
</dbReference>
<dbReference type="GO" id="GO:0046983">
    <property type="term" value="F:protein dimerization activity"/>
    <property type="evidence" value="ECO:0007669"/>
    <property type="project" value="InterPro"/>
</dbReference>
<dbReference type="GO" id="GO:0036001">
    <property type="term" value="P:'de novo' pyridoxal 5'-phosphate biosynthetic process"/>
    <property type="evidence" value="ECO:0007669"/>
    <property type="project" value="TreeGrafter"/>
</dbReference>
<dbReference type="GO" id="GO:0008615">
    <property type="term" value="P:pyridoxine biosynthetic process"/>
    <property type="evidence" value="ECO:0007669"/>
    <property type="project" value="UniProtKB-UniRule"/>
</dbReference>
<dbReference type="CDD" id="cd12158">
    <property type="entry name" value="ErythrP_dh"/>
    <property type="match status" value="1"/>
</dbReference>
<dbReference type="Gene3D" id="3.30.1370.170">
    <property type="match status" value="1"/>
</dbReference>
<dbReference type="Gene3D" id="3.40.50.720">
    <property type="entry name" value="NAD(P)-binding Rossmann-like Domain"/>
    <property type="match status" value="2"/>
</dbReference>
<dbReference type="HAMAP" id="MF_01825">
    <property type="entry name" value="PdxB"/>
    <property type="match status" value="1"/>
</dbReference>
<dbReference type="InterPro" id="IPR006139">
    <property type="entry name" value="D-isomer_2_OHA_DH_cat_dom"/>
</dbReference>
<dbReference type="InterPro" id="IPR029753">
    <property type="entry name" value="D-isomer_DH_CS"/>
</dbReference>
<dbReference type="InterPro" id="IPR006140">
    <property type="entry name" value="D-isomer_DH_NAD-bd"/>
</dbReference>
<dbReference type="InterPro" id="IPR020921">
    <property type="entry name" value="Erythronate-4-P_DHase"/>
</dbReference>
<dbReference type="InterPro" id="IPR024531">
    <property type="entry name" value="Erythronate-4-P_DHase_dimer"/>
</dbReference>
<dbReference type="InterPro" id="IPR036291">
    <property type="entry name" value="NAD(P)-bd_dom_sf"/>
</dbReference>
<dbReference type="InterPro" id="IPR038251">
    <property type="entry name" value="PdxB_dimer_sf"/>
</dbReference>
<dbReference type="PANTHER" id="PTHR42938">
    <property type="entry name" value="FORMATE DEHYDROGENASE 1"/>
    <property type="match status" value="1"/>
</dbReference>
<dbReference type="PANTHER" id="PTHR42938:SF9">
    <property type="entry name" value="FORMATE DEHYDROGENASE 1"/>
    <property type="match status" value="1"/>
</dbReference>
<dbReference type="Pfam" id="PF00389">
    <property type="entry name" value="2-Hacid_dh"/>
    <property type="match status" value="1"/>
</dbReference>
<dbReference type="Pfam" id="PF02826">
    <property type="entry name" value="2-Hacid_dh_C"/>
    <property type="match status" value="1"/>
</dbReference>
<dbReference type="Pfam" id="PF11890">
    <property type="entry name" value="DUF3410"/>
    <property type="match status" value="1"/>
</dbReference>
<dbReference type="SUPFAM" id="SSF52283">
    <property type="entry name" value="Formate/glycerate dehydrogenase catalytic domain-like"/>
    <property type="match status" value="1"/>
</dbReference>
<dbReference type="SUPFAM" id="SSF51735">
    <property type="entry name" value="NAD(P)-binding Rossmann-fold domains"/>
    <property type="match status" value="1"/>
</dbReference>
<dbReference type="PROSITE" id="PS00671">
    <property type="entry name" value="D_2_HYDROXYACID_DH_3"/>
    <property type="match status" value="1"/>
</dbReference>
<organism>
    <name type="scientific">Teredinibacter turnerae (strain ATCC 39867 / T7901)</name>
    <dbReference type="NCBI Taxonomy" id="377629"/>
    <lineage>
        <taxon>Bacteria</taxon>
        <taxon>Pseudomonadati</taxon>
        <taxon>Pseudomonadota</taxon>
        <taxon>Gammaproteobacteria</taxon>
        <taxon>Cellvibrionales</taxon>
        <taxon>Cellvibrionaceae</taxon>
        <taxon>Teredinibacter</taxon>
    </lineage>
</organism>
<accession>C5BR49</accession>